<accession>Q59RK9</accession>
<accession>A0A1D8PPC3</accession>
<gene>
    <name type="primary">OCT1</name>
    <name type="ordered locus">CAALFM_C600340CA</name>
    <name type="ORF">CaO19.1195</name>
    <name type="ORF">CaO19.8786</name>
</gene>
<protein>
    <recommendedName>
        <fullName>Mitochondrial intermediate peptidase</fullName>
        <shortName>MIP</shortName>
        <ecNumber>3.4.24.59</ecNumber>
    </recommendedName>
    <alternativeName>
        <fullName>Octapeptidyl aminopeptidase</fullName>
    </alternativeName>
</protein>
<dbReference type="EC" id="3.4.24.59"/>
<dbReference type="EMBL" id="CP017628">
    <property type="protein sequence ID" value="AOW29983.1"/>
    <property type="molecule type" value="Genomic_DNA"/>
</dbReference>
<dbReference type="RefSeq" id="XP_712312.2">
    <property type="nucleotide sequence ID" value="XM_707219.2"/>
</dbReference>
<dbReference type="SMR" id="Q59RK9"/>
<dbReference type="FunCoup" id="Q59RK9">
    <property type="interactions" value="681"/>
</dbReference>
<dbReference type="STRING" id="237561.Q59RK9"/>
<dbReference type="EnsemblFungi" id="C6_00340C_A-T">
    <property type="protein sequence ID" value="C6_00340C_A-T-p1"/>
    <property type="gene ID" value="C6_00340C_A"/>
</dbReference>
<dbReference type="GeneID" id="3646074"/>
<dbReference type="KEGG" id="cal:CAALFM_C600340CA"/>
<dbReference type="CGD" id="CAL0000183469">
    <property type="gene designation" value="OCT1"/>
</dbReference>
<dbReference type="VEuPathDB" id="FungiDB:C6_00340C_A"/>
<dbReference type="HOGENOM" id="CLU_001805_0_0_1"/>
<dbReference type="InParanoid" id="Q59RK9"/>
<dbReference type="OrthoDB" id="17530at2759"/>
<dbReference type="PRO" id="PR:Q59RK9"/>
<dbReference type="Proteomes" id="UP000000559">
    <property type="component" value="Chromosome 6"/>
</dbReference>
<dbReference type="GO" id="GO:0005759">
    <property type="term" value="C:mitochondrial matrix"/>
    <property type="evidence" value="ECO:0007669"/>
    <property type="project" value="UniProtKB-SubCell"/>
</dbReference>
<dbReference type="GO" id="GO:0005739">
    <property type="term" value="C:mitochondrion"/>
    <property type="evidence" value="ECO:0000315"/>
    <property type="project" value="CGD"/>
</dbReference>
<dbReference type="GO" id="GO:0046872">
    <property type="term" value="F:metal ion binding"/>
    <property type="evidence" value="ECO:0007669"/>
    <property type="project" value="UniProtKB-KW"/>
</dbReference>
<dbReference type="GO" id="GO:0004222">
    <property type="term" value="F:metalloendopeptidase activity"/>
    <property type="evidence" value="ECO:0000318"/>
    <property type="project" value="GO_Central"/>
</dbReference>
<dbReference type="GO" id="GO:0008233">
    <property type="term" value="F:peptidase activity"/>
    <property type="evidence" value="ECO:0000315"/>
    <property type="project" value="CGD"/>
</dbReference>
<dbReference type="GO" id="GO:0044180">
    <property type="term" value="P:filamentous growth of a unicellular organism"/>
    <property type="evidence" value="ECO:0000315"/>
    <property type="project" value="CGD"/>
</dbReference>
<dbReference type="GO" id="GO:0006879">
    <property type="term" value="P:intracellular iron ion homeostasis"/>
    <property type="evidence" value="ECO:0007669"/>
    <property type="project" value="EnsemblFungi"/>
</dbReference>
<dbReference type="GO" id="GO:0042775">
    <property type="term" value="P:mitochondrial ATP synthesis coupled electron transport"/>
    <property type="evidence" value="ECO:0000315"/>
    <property type="project" value="CGD"/>
</dbReference>
<dbReference type="GO" id="GO:0006518">
    <property type="term" value="P:peptide metabolic process"/>
    <property type="evidence" value="ECO:0000318"/>
    <property type="project" value="GO_Central"/>
</dbReference>
<dbReference type="GO" id="GO:0006627">
    <property type="term" value="P:protein processing involved in protein targeting to mitochondrion"/>
    <property type="evidence" value="ECO:0000318"/>
    <property type="project" value="GO_Central"/>
</dbReference>
<dbReference type="GO" id="GO:0050821">
    <property type="term" value="P:protein stabilization"/>
    <property type="evidence" value="ECO:0007669"/>
    <property type="project" value="EnsemblFungi"/>
</dbReference>
<dbReference type="GO" id="GO:0044010">
    <property type="term" value="P:single-species biofilm formation"/>
    <property type="evidence" value="ECO:0000315"/>
    <property type="project" value="CGD"/>
</dbReference>
<dbReference type="CDD" id="cd06457">
    <property type="entry name" value="M3A_MIP"/>
    <property type="match status" value="1"/>
</dbReference>
<dbReference type="Gene3D" id="3.40.390.10">
    <property type="entry name" value="Collagenase (Catalytic Domain)"/>
    <property type="match status" value="1"/>
</dbReference>
<dbReference type="Gene3D" id="1.10.1370.10">
    <property type="entry name" value="Neurolysin, domain 3"/>
    <property type="match status" value="1"/>
</dbReference>
<dbReference type="InterPro" id="IPR033851">
    <property type="entry name" value="M3A_MIP"/>
</dbReference>
<dbReference type="InterPro" id="IPR024079">
    <property type="entry name" value="MetalloPept_cat_dom_sf"/>
</dbReference>
<dbReference type="InterPro" id="IPR024077">
    <property type="entry name" value="Neurolysin/TOP_dom2"/>
</dbReference>
<dbReference type="InterPro" id="IPR045090">
    <property type="entry name" value="Pept_M3A_M3B"/>
</dbReference>
<dbReference type="InterPro" id="IPR001567">
    <property type="entry name" value="Pept_M3A_M3B_dom"/>
</dbReference>
<dbReference type="PANTHER" id="PTHR11804:SF79">
    <property type="entry name" value="MITOCHONDRIAL INTERMEDIATE PEPTIDASE"/>
    <property type="match status" value="1"/>
</dbReference>
<dbReference type="PANTHER" id="PTHR11804">
    <property type="entry name" value="PROTEASE M3 THIMET OLIGOPEPTIDASE-RELATED"/>
    <property type="match status" value="1"/>
</dbReference>
<dbReference type="Pfam" id="PF01432">
    <property type="entry name" value="Peptidase_M3"/>
    <property type="match status" value="1"/>
</dbReference>
<dbReference type="SUPFAM" id="SSF55486">
    <property type="entry name" value="Metalloproteases ('zincins'), catalytic domain"/>
    <property type="match status" value="1"/>
</dbReference>
<dbReference type="PROSITE" id="PS00142">
    <property type="entry name" value="ZINC_PROTEASE"/>
    <property type="match status" value="1"/>
</dbReference>
<name>PMIP_CANAL</name>
<comment type="function">
    <text evidence="1">Cleaves proteins, imported into the mitochondrion, to their mature size. While most mitochondrial precursor proteins are processed to the mature form in one step by mitochondrial processing peptidase (MPP), the sequential cleavage by MIP of an octapeptide after initial processing by MPP is a required step for a subgroup of nuclear-encoded precursor proteins destined for the matrix or the inner membrane (By similarity).</text>
</comment>
<comment type="catalytic activity">
    <reaction>
        <text>Release of an N-terminal octapeptide as second stage of processing of some proteins imported into the mitochondrion.</text>
        <dbReference type="EC" id="3.4.24.59"/>
    </reaction>
</comment>
<comment type="cofactor">
    <cofactor evidence="1">
        <name>Zn(2+)</name>
        <dbReference type="ChEBI" id="CHEBI:29105"/>
    </cofactor>
    <text evidence="1">Binds 1 zinc ion.</text>
</comment>
<comment type="subcellular location">
    <subcellularLocation>
        <location evidence="1">Mitochondrion matrix</location>
    </subcellularLocation>
</comment>
<comment type="similarity">
    <text evidence="4">Belongs to the peptidase M3 family.</text>
</comment>
<organism>
    <name type="scientific">Candida albicans (strain SC5314 / ATCC MYA-2876)</name>
    <name type="common">Yeast</name>
    <dbReference type="NCBI Taxonomy" id="237561"/>
    <lineage>
        <taxon>Eukaryota</taxon>
        <taxon>Fungi</taxon>
        <taxon>Dikarya</taxon>
        <taxon>Ascomycota</taxon>
        <taxon>Saccharomycotina</taxon>
        <taxon>Pichiomycetes</taxon>
        <taxon>Debaryomycetaceae</taxon>
        <taxon>Candida/Lodderomyces clade</taxon>
        <taxon>Candida</taxon>
    </lineage>
</organism>
<feature type="transit peptide" description="Mitochondrion" evidence="2">
    <location>
        <begin position="1"/>
        <end position="33"/>
    </location>
</feature>
<feature type="chain" id="PRO_0000338576" description="Mitochondrial intermediate peptidase">
    <location>
        <begin position="34"/>
        <end position="783"/>
    </location>
</feature>
<feature type="active site" evidence="3">
    <location>
        <position position="566"/>
    </location>
</feature>
<feature type="binding site" evidence="3">
    <location>
        <position position="565"/>
    </location>
    <ligand>
        <name>Zn(2+)</name>
        <dbReference type="ChEBI" id="CHEBI:29105"/>
        <note>catalytic</note>
    </ligand>
</feature>
<feature type="binding site" evidence="3">
    <location>
        <position position="569"/>
    </location>
    <ligand>
        <name>Zn(2+)</name>
        <dbReference type="ChEBI" id="CHEBI:29105"/>
        <note>catalytic</note>
    </ligand>
</feature>
<feature type="binding site" evidence="3">
    <location>
        <position position="572"/>
    </location>
    <ligand>
        <name>Zn(2+)</name>
        <dbReference type="ChEBI" id="CHEBI:29105"/>
        <note>catalytic</note>
    </ligand>
</feature>
<evidence type="ECO:0000250" key="1"/>
<evidence type="ECO:0000255" key="2"/>
<evidence type="ECO:0000255" key="3">
    <source>
        <dbReference type="PROSITE-ProRule" id="PRU10095"/>
    </source>
</evidence>
<evidence type="ECO:0000305" key="4"/>
<keyword id="KW-0378">Hydrolase</keyword>
<keyword id="KW-0479">Metal-binding</keyword>
<keyword id="KW-0482">Metalloprotease</keyword>
<keyword id="KW-0496">Mitochondrion</keyword>
<keyword id="KW-0645">Protease</keyword>
<keyword id="KW-1185">Reference proteome</keyword>
<keyword id="KW-0809">Transit peptide</keyword>
<keyword id="KW-0862">Zinc</keyword>
<sequence>MKAGIPLSRCTQRIPLLVARQVSRNITTTTTKFSLAPEYNHIRKVFDSQKYFNHFTKQGSHATLFSSPQTGLFHNEYLTTPQGLVDFSQQSLSQAKQLVSEMLSQVNTVDGKLKFIKKLDQLSDILCRVIDVAEFIRVVHPSVKWINAAQQTHEMMFEFMNQLNTNVELYSSLRDILNNPLITEQLTPEEIKVGEYLRQDFERSGIHMDPQTRENFVTITQEISLLGSQFGNQINGLKSYWCPVTVAEWESIEDPQLKKEIKNYQSKYDGIRQSETIQIPLVANIPYTILTNCSSDTLRKKVWVALHNSPDEQIETLNRFISYRALLSKMLNYKSFADYQLEHKMAKTPENVITFLFNLQKSLIKKGVVEELSQLSEIKHNGSGSASVNDIVNDIKPWDRDYLLARLQQRMQSEVSAGNVKEYFSVGTVIAGLNELFTRLYDISFVPMAALKGETWDSHQVRKIKVVDNAANKTLGFLYLDFWSTKVLPSHFTIVCSRRLNTSIGSETIEGMEKLVQLDEDYQLPVVSLVCNFASSGNFSFGRFAGVENEKPTLLTLDQVDTIFHEMGHAMHSMIGRTELHNLSGTRCSTDFVELPSVLMESFSKDPRVICQIGRHFDTDEKLPESLLGQAHEHRIMLDACETFMQSKMAMLDQKLHNEEMVNLLAKGLYEVDSTKVYHSVEKELKVFADEWSTWHGKFPHLFSYGAVYYSYLLDRAIADKIWQGLFAKDPWNGEAGKKYKESVLKWGGTRDPWECLADALGNDELKQGDSRAMEIIGQNSNL</sequence>
<reference key="1">
    <citation type="journal article" date="2004" name="Proc. Natl. Acad. Sci. U.S.A.">
        <title>The diploid genome sequence of Candida albicans.</title>
        <authorList>
            <person name="Jones T."/>
            <person name="Federspiel N.A."/>
            <person name="Chibana H."/>
            <person name="Dungan J."/>
            <person name="Kalman S."/>
            <person name="Magee B.B."/>
            <person name="Newport G."/>
            <person name="Thorstenson Y.R."/>
            <person name="Agabian N."/>
            <person name="Magee P.T."/>
            <person name="Davis R.W."/>
            <person name="Scherer S."/>
        </authorList>
    </citation>
    <scope>NUCLEOTIDE SEQUENCE [LARGE SCALE GENOMIC DNA]</scope>
    <source>
        <strain>SC5314 / ATCC MYA-2876</strain>
    </source>
</reference>
<reference key="2">
    <citation type="journal article" date="2007" name="Genome Biol.">
        <title>Assembly of the Candida albicans genome into sixteen supercontigs aligned on the eight chromosomes.</title>
        <authorList>
            <person name="van het Hoog M."/>
            <person name="Rast T.J."/>
            <person name="Martchenko M."/>
            <person name="Grindle S."/>
            <person name="Dignard D."/>
            <person name="Hogues H."/>
            <person name="Cuomo C."/>
            <person name="Berriman M."/>
            <person name="Scherer S."/>
            <person name="Magee B.B."/>
            <person name="Whiteway M."/>
            <person name="Chibana H."/>
            <person name="Nantel A."/>
            <person name="Magee P.T."/>
        </authorList>
    </citation>
    <scope>GENOME REANNOTATION</scope>
    <source>
        <strain>SC5314 / ATCC MYA-2876</strain>
    </source>
</reference>
<reference key="3">
    <citation type="journal article" date="2013" name="Genome Biol.">
        <title>Assembly of a phased diploid Candida albicans genome facilitates allele-specific measurements and provides a simple model for repeat and indel structure.</title>
        <authorList>
            <person name="Muzzey D."/>
            <person name="Schwartz K."/>
            <person name="Weissman J.S."/>
            <person name="Sherlock G."/>
        </authorList>
    </citation>
    <scope>NUCLEOTIDE SEQUENCE [LARGE SCALE GENOMIC DNA]</scope>
    <scope>GENOME REANNOTATION</scope>
    <source>
        <strain>SC5314 / ATCC MYA-2876</strain>
    </source>
</reference>
<proteinExistence type="inferred from homology"/>